<protein>
    <recommendedName>
        <fullName evidence="3">Gigasin-1</fullName>
    </recommendedName>
</protein>
<proteinExistence type="evidence at protein level"/>
<organism>
    <name type="scientific">Magallana gigas</name>
    <name type="common">Pacific oyster</name>
    <name type="synonym">Crassostrea gigas</name>
    <dbReference type="NCBI Taxonomy" id="29159"/>
    <lineage>
        <taxon>Eukaryota</taxon>
        <taxon>Metazoa</taxon>
        <taxon>Spiralia</taxon>
        <taxon>Lophotrochozoa</taxon>
        <taxon>Mollusca</taxon>
        <taxon>Bivalvia</taxon>
        <taxon>Autobranchia</taxon>
        <taxon>Pteriomorphia</taxon>
        <taxon>Ostreida</taxon>
        <taxon>Ostreoidea</taxon>
        <taxon>Ostreidae</taxon>
        <taxon>Magallana</taxon>
    </lineage>
</organism>
<dbReference type="EMBL" id="AM865814">
    <property type="status" value="NOT_ANNOTATED_CDS"/>
    <property type="molecule type" value="mRNA"/>
</dbReference>
<dbReference type="SMR" id="P86784"/>
<dbReference type="InParanoid" id="P86784"/>
<dbReference type="Proteomes" id="UP000005408">
    <property type="component" value="Unplaced"/>
</dbReference>
<comment type="tissue specificity">
    <text evidence="2">Component of the organic matrix of calcified shell layers.</text>
</comment>
<name>GIGA1_MAGGI</name>
<evidence type="ECO:0000256" key="1">
    <source>
        <dbReference type="SAM" id="MobiDB-lite"/>
    </source>
</evidence>
<evidence type="ECO:0000269" key="2">
    <source ref="2"/>
</evidence>
<evidence type="ECO:0000303" key="3">
    <source ref="2"/>
</evidence>
<evidence type="ECO:0000305" key="4"/>
<reference evidence="4" key="1">
    <citation type="journal article" date="2008" name="Gene">
        <title>Increasing genomic information in bivalves through new EST collections in four species: development of new genetic markers for environmental studies and genome evolution.</title>
        <authorList>
            <person name="Tanguy A."/>
            <person name="Bierne N."/>
            <person name="Saavedra C."/>
            <person name="Pina B."/>
            <person name="Bachere E."/>
            <person name="Kube M."/>
            <person name="Bazin E."/>
            <person name="Bonhomme F."/>
            <person name="Boudry P."/>
            <person name="Boulo V."/>
            <person name="Boutet I."/>
            <person name="Cancela L."/>
            <person name="Dossat C."/>
            <person name="Favrel P."/>
            <person name="Huvet A."/>
            <person name="Jarque S."/>
            <person name="Jollivet D."/>
            <person name="Klages S."/>
            <person name="Lapegue S."/>
            <person name="Leite R."/>
            <person name="Moal J."/>
            <person name="Moraga D."/>
            <person name="Reinhardt R."/>
            <person name="Samain J.F."/>
            <person name="Zouros E."/>
            <person name="Canario A."/>
        </authorList>
    </citation>
    <scope>NUCLEOTIDE SEQUENCE [MRNA]</scope>
</reference>
<reference evidence="4" key="2">
    <citation type="journal article" date="2010" name="FEBS Lett.">
        <title>Proteomic identification of novel proteins from the calcifying shell matrix of the Pacific oyster Crassostrea gigas.</title>
        <authorList>
            <person name="Marie B."/>
            <person name="Zanella-Cleon I."/>
            <person name="Becchi M."/>
            <person name="Marin F."/>
        </authorList>
    </citation>
    <scope>PROTEIN SEQUENCE OF 7-13; 54-60 AND 79-90</scope>
    <scope>TISSUE SPECIFICITY</scope>
    <source>
        <tissue evidence="2">Shell</tissue>
    </source>
</reference>
<keyword id="KW-0903">Direct protein sequencing</keyword>
<keyword id="KW-1185">Reference proteome</keyword>
<sequence>GKATTKKVEIPERDRYDNGYDNHGHDDFEHDQTEVDIQEVVRKEKESYDHNERDIYGNARNDFEHVQTEVDIQEVVRKEKESYDHNIGDRYGNIHDDFEHDQTEVDIQEVVRKEEESYDRNEGDRYGNGHDDFEHDQTEVDIQEVVRKEKESYAHKYRR</sequence>
<feature type="chain" id="PRO_0000403306" description="Gigasin-1">
    <location>
        <begin position="1" status="less than"/>
        <end position="159" status="greater than"/>
    </location>
</feature>
<feature type="region of interest" description="Disordered" evidence="1">
    <location>
        <begin position="1"/>
        <end position="33"/>
    </location>
</feature>
<feature type="region of interest" description="Disordered" evidence="1">
    <location>
        <begin position="80"/>
        <end position="159"/>
    </location>
</feature>
<feature type="non-terminal residue" evidence="4">
    <location>
        <position position="1"/>
    </location>
</feature>
<feature type="non-terminal residue" evidence="4">
    <location>
        <position position="159"/>
    </location>
</feature>
<accession>P86784</accession>